<feature type="chain" id="PRO_0000111291" description="Small ribosomal subunit protein bS18c">
    <location>
        <begin position="1"/>
        <end position="104"/>
    </location>
</feature>
<keyword id="KW-0150">Chloroplast</keyword>
<keyword id="KW-0934">Plastid</keyword>
<keyword id="KW-0687">Ribonucleoprotein</keyword>
<keyword id="KW-0689">Ribosomal protein</keyword>
<keyword id="KW-0694">RNA-binding</keyword>
<keyword id="KW-0699">rRNA-binding</keyword>
<name>RR18_LOTJA</name>
<proteinExistence type="inferred from homology"/>
<protein>
    <recommendedName>
        <fullName evidence="1">Small ribosomal subunit protein bS18c</fullName>
    </recommendedName>
    <alternativeName>
        <fullName evidence="2">30S ribosomal protein S18, chloroplastic</fullName>
    </alternativeName>
</protein>
<dbReference type="EMBL" id="AP002983">
    <property type="protein sequence ID" value="BAB33218.1"/>
    <property type="molecule type" value="Genomic_DNA"/>
</dbReference>
<dbReference type="RefSeq" id="NP_084820.1">
    <property type="nucleotide sequence ID" value="NC_002694.1"/>
</dbReference>
<dbReference type="SMR" id="Q9BBR1"/>
<dbReference type="GeneID" id="802897"/>
<dbReference type="GO" id="GO:0009507">
    <property type="term" value="C:chloroplast"/>
    <property type="evidence" value="ECO:0007669"/>
    <property type="project" value="UniProtKB-SubCell"/>
</dbReference>
<dbReference type="GO" id="GO:0005763">
    <property type="term" value="C:mitochondrial small ribosomal subunit"/>
    <property type="evidence" value="ECO:0007669"/>
    <property type="project" value="TreeGrafter"/>
</dbReference>
<dbReference type="GO" id="GO:0070181">
    <property type="term" value="F:small ribosomal subunit rRNA binding"/>
    <property type="evidence" value="ECO:0007669"/>
    <property type="project" value="TreeGrafter"/>
</dbReference>
<dbReference type="GO" id="GO:0003735">
    <property type="term" value="F:structural constituent of ribosome"/>
    <property type="evidence" value="ECO:0007669"/>
    <property type="project" value="InterPro"/>
</dbReference>
<dbReference type="GO" id="GO:0006412">
    <property type="term" value="P:translation"/>
    <property type="evidence" value="ECO:0007669"/>
    <property type="project" value="UniProtKB-UniRule"/>
</dbReference>
<dbReference type="FunFam" id="4.10.640.10:FF:000002">
    <property type="entry name" value="30S ribosomal protein S18, chloroplastic"/>
    <property type="match status" value="1"/>
</dbReference>
<dbReference type="Gene3D" id="4.10.640.10">
    <property type="entry name" value="Ribosomal protein S18"/>
    <property type="match status" value="1"/>
</dbReference>
<dbReference type="HAMAP" id="MF_00270">
    <property type="entry name" value="Ribosomal_bS18"/>
    <property type="match status" value="1"/>
</dbReference>
<dbReference type="InterPro" id="IPR001648">
    <property type="entry name" value="Ribosomal_bS18"/>
</dbReference>
<dbReference type="InterPro" id="IPR018275">
    <property type="entry name" value="Ribosomal_bS18_CS"/>
</dbReference>
<dbReference type="InterPro" id="IPR036870">
    <property type="entry name" value="Ribosomal_bS18_sf"/>
</dbReference>
<dbReference type="NCBIfam" id="TIGR00165">
    <property type="entry name" value="S18"/>
    <property type="match status" value="1"/>
</dbReference>
<dbReference type="PANTHER" id="PTHR13479">
    <property type="entry name" value="30S RIBOSOMAL PROTEIN S18"/>
    <property type="match status" value="1"/>
</dbReference>
<dbReference type="PANTHER" id="PTHR13479:SF40">
    <property type="entry name" value="SMALL RIBOSOMAL SUBUNIT PROTEIN BS18M"/>
    <property type="match status" value="1"/>
</dbReference>
<dbReference type="Pfam" id="PF01084">
    <property type="entry name" value="Ribosomal_S18"/>
    <property type="match status" value="1"/>
</dbReference>
<dbReference type="PRINTS" id="PR00974">
    <property type="entry name" value="RIBOSOMALS18"/>
</dbReference>
<dbReference type="SUPFAM" id="SSF46911">
    <property type="entry name" value="Ribosomal protein S18"/>
    <property type="match status" value="1"/>
</dbReference>
<dbReference type="PROSITE" id="PS00057">
    <property type="entry name" value="RIBOSOMAL_S18"/>
    <property type="match status" value="1"/>
</dbReference>
<comment type="subunit">
    <text>Part of the 30S ribosomal subunit.</text>
</comment>
<comment type="subcellular location">
    <subcellularLocation>
        <location>Plastid</location>
        <location>Chloroplast</location>
    </subcellularLocation>
</comment>
<comment type="similarity">
    <text evidence="1">Belongs to the bacterial ribosomal protein bS18 family.</text>
</comment>
<geneLocation type="chloroplast"/>
<sequence length="104" mass="12415">MDKSKRLFLKSKRFFRRRLPPIQSGDRIDYKNMSLISRFISEQGKILSRRVNRLTLKQQRLITIAIKQARILSSLPFINNEKKQFEKSELTATRTTTVFKTKKR</sequence>
<evidence type="ECO:0000255" key="1">
    <source>
        <dbReference type="HAMAP-Rule" id="MF_00270"/>
    </source>
</evidence>
<evidence type="ECO:0000305" key="2"/>
<accession>Q9BBR1</accession>
<reference key="1">
    <citation type="journal article" date="2000" name="DNA Res.">
        <title>Complete structure of the chloroplast genome of a legume, Lotus japonicus.</title>
        <authorList>
            <person name="Kato T."/>
            <person name="Kaneko T."/>
            <person name="Sato S."/>
            <person name="Nakamura Y."/>
            <person name="Tabata S."/>
        </authorList>
    </citation>
    <scope>NUCLEOTIDE SEQUENCE [LARGE SCALE GENOMIC DNA]</scope>
    <source>
        <strain>cv. Miyakojima MG-20</strain>
    </source>
</reference>
<gene>
    <name evidence="1" type="primary">rps18</name>
</gene>
<organism>
    <name type="scientific">Lotus japonicus</name>
    <name type="common">Lotus corniculatus var. japonicus</name>
    <dbReference type="NCBI Taxonomy" id="34305"/>
    <lineage>
        <taxon>Eukaryota</taxon>
        <taxon>Viridiplantae</taxon>
        <taxon>Streptophyta</taxon>
        <taxon>Embryophyta</taxon>
        <taxon>Tracheophyta</taxon>
        <taxon>Spermatophyta</taxon>
        <taxon>Magnoliopsida</taxon>
        <taxon>eudicotyledons</taxon>
        <taxon>Gunneridae</taxon>
        <taxon>Pentapetalae</taxon>
        <taxon>rosids</taxon>
        <taxon>fabids</taxon>
        <taxon>Fabales</taxon>
        <taxon>Fabaceae</taxon>
        <taxon>Papilionoideae</taxon>
        <taxon>50 kb inversion clade</taxon>
        <taxon>NPAAA clade</taxon>
        <taxon>Hologalegina</taxon>
        <taxon>robinioid clade</taxon>
        <taxon>Loteae</taxon>
        <taxon>Lotus</taxon>
    </lineage>
</organism>